<reference key="1">
    <citation type="journal article" date="2004" name="Nat. Genet.">
        <title>Complete sequencing and characterization of 21,243 full-length human cDNAs.</title>
        <authorList>
            <person name="Ota T."/>
            <person name="Suzuki Y."/>
            <person name="Nishikawa T."/>
            <person name="Otsuki T."/>
            <person name="Sugiyama T."/>
            <person name="Irie R."/>
            <person name="Wakamatsu A."/>
            <person name="Hayashi K."/>
            <person name="Sato H."/>
            <person name="Nagai K."/>
            <person name="Kimura K."/>
            <person name="Makita H."/>
            <person name="Sekine M."/>
            <person name="Obayashi M."/>
            <person name="Nishi T."/>
            <person name="Shibahara T."/>
            <person name="Tanaka T."/>
            <person name="Ishii S."/>
            <person name="Yamamoto J."/>
            <person name="Saito K."/>
            <person name="Kawai Y."/>
            <person name="Isono Y."/>
            <person name="Nakamura Y."/>
            <person name="Nagahari K."/>
            <person name="Murakami K."/>
            <person name="Yasuda T."/>
            <person name="Iwayanagi T."/>
            <person name="Wagatsuma M."/>
            <person name="Shiratori A."/>
            <person name="Sudo H."/>
            <person name="Hosoiri T."/>
            <person name="Kaku Y."/>
            <person name="Kodaira H."/>
            <person name="Kondo H."/>
            <person name="Sugawara M."/>
            <person name="Takahashi M."/>
            <person name="Kanda K."/>
            <person name="Yokoi T."/>
            <person name="Furuya T."/>
            <person name="Kikkawa E."/>
            <person name="Omura Y."/>
            <person name="Abe K."/>
            <person name="Kamihara K."/>
            <person name="Katsuta N."/>
            <person name="Sato K."/>
            <person name="Tanikawa M."/>
            <person name="Yamazaki M."/>
            <person name="Ninomiya K."/>
            <person name="Ishibashi T."/>
            <person name="Yamashita H."/>
            <person name="Murakawa K."/>
            <person name="Fujimori K."/>
            <person name="Tanai H."/>
            <person name="Kimata M."/>
            <person name="Watanabe M."/>
            <person name="Hiraoka S."/>
            <person name="Chiba Y."/>
            <person name="Ishida S."/>
            <person name="Ono Y."/>
            <person name="Takiguchi S."/>
            <person name="Watanabe S."/>
            <person name="Yosida M."/>
            <person name="Hotuta T."/>
            <person name="Kusano J."/>
            <person name="Kanehori K."/>
            <person name="Takahashi-Fujii A."/>
            <person name="Hara H."/>
            <person name="Tanase T.-O."/>
            <person name="Nomura Y."/>
            <person name="Togiya S."/>
            <person name="Komai F."/>
            <person name="Hara R."/>
            <person name="Takeuchi K."/>
            <person name="Arita M."/>
            <person name="Imose N."/>
            <person name="Musashino K."/>
            <person name="Yuuki H."/>
            <person name="Oshima A."/>
            <person name="Sasaki N."/>
            <person name="Aotsuka S."/>
            <person name="Yoshikawa Y."/>
            <person name="Matsunawa H."/>
            <person name="Ichihara T."/>
            <person name="Shiohata N."/>
            <person name="Sano S."/>
            <person name="Moriya S."/>
            <person name="Momiyama H."/>
            <person name="Satoh N."/>
            <person name="Takami S."/>
            <person name="Terashima Y."/>
            <person name="Suzuki O."/>
            <person name="Nakagawa S."/>
            <person name="Senoh A."/>
            <person name="Mizoguchi H."/>
            <person name="Goto Y."/>
            <person name="Shimizu F."/>
            <person name="Wakebe H."/>
            <person name="Hishigaki H."/>
            <person name="Watanabe T."/>
            <person name="Sugiyama A."/>
            <person name="Takemoto M."/>
            <person name="Kawakami B."/>
            <person name="Yamazaki M."/>
            <person name="Watanabe K."/>
            <person name="Kumagai A."/>
            <person name="Itakura S."/>
            <person name="Fukuzumi Y."/>
            <person name="Fujimori Y."/>
            <person name="Komiyama M."/>
            <person name="Tashiro H."/>
            <person name="Tanigami A."/>
            <person name="Fujiwara T."/>
            <person name="Ono T."/>
            <person name="Yamada K."/>
            <person name="Fujii Y."/>
            <person name="Ozaki K."/>
            <person name="Hirao M."/>
            <person name="Ohmori Y."/>
            <person name="Kawabata A."/>
            <person name="Hikiji T."/>
            <person name="Kobatake N."/>
            <person name="Inagaki H."/>
            <person name="Ikema Y."/>
            <person name="Okamoto S."/>
            <person name="Okitani R."/>
            <person name="Kawakami T."/>
            <person name="Noguchi S."/>
            <person name="Itoh T."/>
            <person name="Shigeta K."/>
            <person name="Senba T."/>
            <person name="Matsumura K."/>
            <person name="Nakajima Y."/>
            <person name="Mizuno T."/>
            <person name="Morinaga M."/>
            <person name="Sasaki M."/>
            <person name="Togashi T."/>
            <person name="Oyama M."/>
            <person name="Hata H."/>
            <person name="Watanabe M."/>
            <person name="Komatsu T."/>
            <person name="Mizushima-Sugano J."/>
            <person name="Satoh T."/>
            <person name="Shirai Y."/>
            <person name="Takahashi Y."/>
            <person name="Nakagawa K."/>
            <person name="Okumura K."/>
            <person name="Nagase T."/>
            <person name="Nomura N."/>
            <person name="Kikuchi H."/>
            <person name="Masuho Y."/>
            <person name="Yamashita R."/>
            <person name="Nakai K."/>
            <person name="Yada T."/>
            <person name="Nakamura Y."/>
            <person name="Ohara O."/>
            <person name="Isogai T."/>
            <person name="Sugano S."/>
        </authorList>
    </citation>
    <scope>NUCLEOTIDE SEQUENCE [LARGE SCALE MRNA]</scope>
    <source>
        <tissue>Spleen</tissue>
    </source>
</reference>
<reference key="2">
    <citation type="journal article" date="2007" name="BMC Genomics">
        <title>The full-ORF clone resource of the German cDNA consortium.</title>
        <authorList>
            <person name="Bechtel S."/>
            <person name="Rosenfelder H."/>
            <person name="Duda A."/>
            <person name="Schmidt C.P."/>
            <person name="Ernst U."/>
            <person name="Wellenreuther R."/>
            <person name="Mehrle A."/>
            <person name="Schuster C."/>
            <person name="Bahr A."/>
            <person name="Bloecker H."/>
            <person name="Heubner D."/>
            <person name="Hoerlein A."/>
            <person name="Michel G."/>
            <person name="Wedler H."/>
            <person name="Koehrer K."/>
            <person name="Ottenwaelder B."/>
            <person name="Poustka A."/>
            <person name="Wiemann S."/>
            <person name="Schupp I."/>
        </authorList>
    </citation>
    <scope>NUCLEOTIDE SEQUENCE [LARGE SCALE MRNA]</scope>
    <source>
        <tissue>Retina</tissue>
    </source>
</reference>
<reference key="3">
    <citation type="journal article" date="2006" name="Nature">
        <title>DNA sequence of human chromosome 17 and analysis of rearrangement in the human lineage.</title>
        <authorList>
            <person name="Zody M.C."/>
            <person name="Garber M."/>
            <person name="Adams D.J."/>
            <person name="Sharpe T."/>
            <person name="Harrow J."/>
            <person name="Lupski J.R."/>
            <person name="Nicholson C."/>
            <person name="Searle S.M."/>
            <person name="Wilming L."/>
            <person name="Young S.K."/>
            <person name="Abouelleil A."/>
            <person name="Allen N.R."/>
            <person name="Bi W."/>
            <person name="Bloom T."/>
            <person name="Borowsky M.L."/>
            <person name="Bugalter B.E."/>
            <person name="Butler J."/>
            <person name="Chang J.L."/>
            <person name="Chen C.-K."/>
            <person name="Cook A."/>
            <person name="Corum B."/>
            <person name="Cuomo C.A."/>
            <person name="de Jong P.J."/>
            <person name="DeCaprio D."/>
            <person name="Dewar K."/>
            <person name="FitzGerald M."/>
            <person name="Gilbert J."/>
            <person name="Gibson R."/>
            <person name="Gnerre S."/>
            <person name="Goldstein S."/>
            <person name="Grafham D.V."/>
            <person name="Grocock R."/>
            <person name="Hafez N."/>
            <person name="Hagopian D.S."/>
            <person name="Hart E."/>
            <person name="Norman C.H."/>
            <person name="Humphray S."/>
            <person name="Jaffe D.B."/>
            <person name="Jones M."/>
            <person name="Kamal M."/>
            <person name="Khodiyar V.K."/>
            <person name="LaButti K."/>
            <person name="Laird G."/>
            <person name="Lehoczky J."/>
            <person name="Liu X."/>
            <person name="Lokyitsang T."/>
            <person name="Loveland J."/>
            <person name="Lui A."/>
            <person name="Macdonald P."/>
            <person name="Major J.E."/>
            <person name="Matthews L."/>
            <person name="Mauceli E."/>
            <person name="McCarroll S.A."/>
            <person name="Mihalev A.H."/>
            <person name="Mudge J."/>
            <person name="Nguyen C."/>
            <person name="Nicol R."/>
            <person name="O'Leary S.B."/>
            <person name="Osoegawa K."/>
            <person name="Schwartz D.C."/>
            <person name="Shaw-Smith C."/>
            <person name="Stankiewicz P."/>
            <person name="Steward C."/>
            <person name="Swarbreck D."/>
            <person name="Venkataraman V."/>
            <person name="Whittaker C.A."/>
            <person name="Yang X."/>
            <person name="Zimmer A.R."/>
            <person name="Bradley A."/>
            <person name="Hubbard T."/>
            <person name="Birren B.W."/>
            <person name="Rogers J."/>
            <person name="Lander E.S."/>
            <person name="Nusbaum C."/>
        </authorList>
    </citation>
    <scope>NUCLEOTIDE SEQUENCE [LARGE SCALE GENOMIC DNA]</scope>
</reference>
<reference key="4">
    <citation type="journal article" date="2004" name="Genome Res.">
        <title>The status, quality, and expansion of the NIH full-length cDNA project: the Mammalian Gene Collection (MGC).</title>
        <authorList>
            <consortium name="The MGC Project Team"/>
        </authorList>
    </citation>
    <scope>NUCLEOTIDE SEQUENCE [LARGE SCALE MRNA]</scope>
    <source>
        <tissue>Melanoma</tissue>
        <tissue>Uterus</tissue>
    </source>
</reference>
<reference key="5">
    <citation type="journal article" date="2009" name="Mol. Cell">
        <title>RPA-like mammalian Ctc1-Stn1-Ten1 complex binds to single-stranded DNA and protects telomeres independently of the Pot1 pathway.</title>
        <authorList>
            <person name="Miyake Y."/>
            <person name="Nakamura M."/>
            <person name="Nabetani A."/>
            <person name="Shimamura S."/>
            <person name="Tamura M."/>
            <person name="Yonehara S."/>
            <person name="Saito M."/>
            <person name="Ishikawa F."/>
        </authorList>
    </citation>
    <scope>FUNCTION</scope>
    <scope>IDENTIFICATION IN THE CST COMPLEX</scope>
    <scope>SUBCELLULAR LOCATION</scope>
    <scope>INTERACTION WITH STN1</scope>
</reference>
<reference key="6">
    <citation type="journal article" date="2012" name="EMBO J.">
        <title>Human CST promotes telomere duplex replication and general replication restart after fork stalling.</title>
        <authorList>
            <person name="Stewart J.A."/>
            <person name="Wang F."/>
            <person name="Chaiken M.F."/>
            <person name="Kasbek C."/>
            <person name="Chastain P.D. II"/>
            <person name="Wright W.E."/>
            <person name="Price C.M."/>
        </authorList>
    </citation>
    <scope>FUNCTION OF THE CST COMPLEX</scope>
</reference>
<reference key="7">
    <citation type="journal article" date="2012" name="Nature">
        <title>The human CST complex is a terminator of telomerase activity.</title>
        <authorList>
            <person name="Chen L.Y."/>
            <person name="Redon S."/>
            <person name="Lingner J."/>
        </authorList>
    </citation>
    <scope>FUNCTION OF THE CST COMPLEX</scope>
</reference>
<reference key="8">
    <citation type="journal article" date="2014" name="Cell Cycle">
        <title>Human CST abundance determines recovery from diverse forms of DNA damage and replication stress.</title>
        <authorList>
            <person name="Wang F."/>
            <person name="Stewart J."/>
            <person name="Price C.M."/>
        </authorList>
    </citation>
    <scope>FUNCTION OF THE CST COMPLEX</scope>
</reference>
<reference key="9">
    <citation type="journal article" date="2013" name="PLoS ONE">
        <title>Structure of the human telomeric Stn1-Ten1 capping complex.</title>
        <authorList>
            <person name="Bryan C."/>
            <person name="Rice C."/>
            <person name="Harkisheimer M."/>
            <person name="Schultz D.C."/>
            <person name="Skordalakes E."/>
        </authorList>
    </citation>
    <scope>X-RAY CRYSTALLOGRAPHY (2.05 ANGSTROMS) OF 2-123 IN COMPLEX WITH STN1</scope>
    <scope>OB FOLD DNA-BINDING</scope>
    <scope>MUTAGENESIS OF TYR-115 AND ARG-119</scope>
</reference>
<accession>Q86WV5</accession>
<accession>I3L0C7</accession>
<proteinExistence type="evidence at protein level"/>
<sequence>MMLPKPGTYYLPWEVSAGQVPDGSTLRTFGRLCLYDMIQSRVTLMAQHGSDQHQVLVCTKLVEPFHAQVGSLYIVLGELQHQQDRGSVVKARVLTCVEGMNLPLLEQAIREQRLYKQERGGSQ</sequence>
<keyword id="KW-0002">3D-structure</keyword>
<keyword id="KW-0158">Chromosome</keyword>
<keyword id="KW-0238">DNA-binding</keyword>
<keyword id="KW-0539">Nucleus</keyword>
<keyword id="KW-1267">Proteomics identification</keyword>
<keyword id="KW-1185">Reference proteome</keyword>
<keyword id="KW-0779">Telomere</keyword>
<feature type="chain" id="PRO_0000334683" description="CST complex subunit TEN1">
    <location>
        <begin position="1"/>
        <end position="123"/>
    </location>
</feature>
<feature type="DNA-binding region" description="OB">
    <location>
        <begin position="2"/>
        <end position="123"/>
    </location>
</feature>
<feature type="mutagenesis site" description="2.5-fold reduction in binding affinity for STN1." evidence="3">
    <original>Y</original>
    <variation>A</variation>
    <location>
        <position position="115"/>
    </location>
</feature>
<feature type="mutagenesis site" description="2-fold reduction in binding affinity for STN1." evidence="3">
    <original>R</original>
    <variation>Q</variation>
    <location>
        <position position="119"/>
    </location>
</feature>
<feature type="sequence conflict" description="In Ref. 4; BM558420." evidence="5" ref="4">
    <original>A</original>
    <variation>S</variation>
    <location>
        <position position="46"/>
    </location>
</feature>
<feature type="helix" evidence="6">
    <location>
        <begin position="12"/>
        <end position="16"/>
    </location>
</feature>
<feature type="strand" evidence="6">
    <location>
        <begin position="25"/>
        <end position="36"/>
    </location>
</feature>
<feature type="turn" evidence="6">
    <location>
        <begin position="37"/>
        <end position="40"/>
    </location>
</feature>
<feature type="strand" evidence="6">
    <location>
        <begin position="41"/>
        <end position="48"/>
    </location>
</feature>
<feature type="strand" evidence="6">
    <location>
        <begin position="51"/>
        <end position="58"/>
    </location>
</feature>
<feature type="helix" evidence="6">
    <location>
        <begin position="60"/>
        <end position="62"/>
    </location>
</feature>
<feature type="strand" evidence="6">
    <location>
        <begin position="71"/>
        <end position="80"/>
    </location>
</feature>
<feature type="strand" evidence="6">
    <location>
        <begin position="83"/>
        <end position="85"/>
    </location>
</feature>
<feature type="strand" evidence="6">
    <location>
        <begin position="88"/>
        <end position="96"/>
    </location>
</feature>
<feature type="helix" evidence="6">
    <location>
        <begin position="102"/>
        <end position="118"/>
    </location>
</feature>
<dbReference type="EMBL" id="AK097104">
    <property type="status" value="NOT_ANNOTATED_CDS"/>
    <property type="molecule type" value="mRNA"/>
</dbReference>
<dbReference type="EMBL" id="BX647274">
    <property type="status" value="NOT_ANNOTATED_CDS"/>
    <property type="molecule type" value="mRNA"/>
</dbReference>
<dbReference type="EMBL" id="AC040980">
    <property type="status" value="NOT_ANNOTATED_CDS"/>
    <property type="molecule type" value="Genomic_DNA"/>
</dbReference>
<dbReference type="EMBL" id="BC047782">
    <property type="protein sequence ID" value="AAH47782.1"/>
    <property type="status" value="ALT_INIT"/>
    <property type="molecule type" value="mRNA"/>
</dbReference>
<dbReference type="EMBL" id="BM558420">
    <property type="status" value="NOT_ANNOTATED_CDS"/>
    <property type="molecule type" value="mRNA"/>
</dbReference>
<dbReference type="CCDS" id="CCDS45780.2"/>
<dbReference type="RefSeq" id="NP_001106795.2">
    <property type="nucleotide sequence ID" value="NM_001113324.3"/>
</dbReference>
<dbReference type="PDB" id="4JOI">
    <property type="method" value="X-ray"/>
    <property type="resolution" value="2.05 A"/>
    <property type="chains" value="C/D=2-123"/>
</dbReference>
<dbReference type="PDB" id="6W6W">
    <property type="method" value="EM"/>
    <property type="resolution" value="3.00 A"/>
    <property type="chains" value="D=3-123"/>
</dbReference>
<dbReference type="PDB" id="7U5C">
    <property type="method" value="EM"/>
    <property type="resolution" value="4.60 A"/>
    <property type="chains" value="G=1-123"/>
</dbReference>
<dbReference type="PDB" id="8D0B">
    <property type="method" value="EM"/>
    <property type="resolution" value="3.43 A"/>
    <property type="chains" value="C=3-123"/>
</dbReference>
<dbReference type="PDB" id="8D0K">
    <property type="method" value="EM"/>
    <property type="resolution" value="4.27 A"/>
    <property type="chains" value="C=3-123"/>
</dbReference>
<dbReference type="PDB" id="8SOJ">
    <property type="method" value="EM"/>
    <property type="resolution" value="3.80 A"/>
    <property type="chains" value="C=1-123"/>
</dbReference>
<dbReference type="PDB" id="8SOK">
    <property type="method" value="EM"/>
    <property type="resolution" value="4.10 A"/>
    <property type="chains" value="C=1-123"/>
</dbReference>
<dbReference type="PDBsum" id="4JOI"/>
<dbReference type="PDBsum" id="6W6W"/>
<dbReference type="PDBsum" id="7U5C"/>
<dbReference type="PDBsum" id="8D0B"/>
<dbReference type="PDBsum" id="8D0K"/>
<dbReference type="PDBsum" id="8SOJ"/>
<dbReference type="PDBsum" id="8SOK"/>
<dbReference type="EMDB" id="EMD-21567"/>
<dbReference type="EMDB" id="EMD-26346"/>
<dbReference type="EMDB" id="EMD-26347"/>
<dbReference type="EMDB" id="EMD-27104"/>
<dbReference type="EMDB" id="EMD-27107"/>
<dbReference type="EMDB" id="EMD-40659"/>
<dbReference type="EMDB" id="EMD-40660"/>
<dbReference type="SMR" id="Q86WV5"/>
<dbReference type="BioGRID" id="756076">
    <property type="interactions" value="6"/>
</dbReference>
<dbReference type="ComplexPortal" id="CPX-2129">
    <property type="entry name" value="CST complex"/>
</dbReference>
<dbReference type="CORUM" id="Q86WV5"/>
<dbReference type="DIP" id="DIP-56901N"/>
<dbReference type="FunCoup" id="Q86WV5">
    <property type="interactions" value="661"/>
</dbReference>
<dbReference type="IntAct" id="Q86WV5">
    <property type="interactions" value="22"/>
</dbReference>
<dbReference type="STRING" id="9606.ENSP00000380762"/>
<dbReference type="BioMuta" id="TEN1"/>
<dbReference type="jPOST" id="Q86WV5"/>
<dbReference type="MassIVE" id="Q86WV5"/>
<dbReference type="PaxDb" id="9606-ENSP00000380762"/>
<dbReference type="PeptideAtlas" id="Q86WV5"/>
<dbReference type="ProteomicsDB" id="46327"/>
<dbReference type="ProteomicsDB" id="70210"/>
<dbReference type="Antibodypedia" id="49436">
    <property type="antibodies" value="7 antibodies from 4 providers"/>
</dbReference>
<dbReference type="DNASU" id="100134934"/>
<dbReference type="Ensembl" id="ENST00000397640.6">
    <property type="protein sequence ID" value="ENSP00000380762.1"/>
    <property type="gene ID" value="ENSG00000257949.7"/>
</dbReference>
<dbReference type="GeneID" id="100134934"/>
<dbReference type="KEGG" id="hsa:100134934"/>
<dbReference type="MANE-Select" id="ENST00000397640.6">
    <property type="protein sequence ID" value="ENSP00000380762.1"/>
    <property type="RefSeq nucleotide sequence ID" value="NM_001113324.3"/>
    <property type="RefSeq protein sequence ID" value="NP_001106795.2"/>
</dbReference>
<dbReference type="UCSC" id="uc060kgd.1">
    <property type="organism name" value="human"/>
</dbReference>
<dbReference type="AGR" id="HGNC:37242"/>
<dbReference type="CTD" id="100134934"/>
<dbReference type="DisGeNET" id="100134934"/>
<dbReference type="GeneCards" id="TEN1"/>
<dbReference type="HGNC" id="HGNC:37242">
    <property type="gene designation" value="TEN1"/>
</dbReference>
<dbReference type="HPA" id="ENSG00000257949">
    <property type="expression patterns" value="Low tissue specificity"/>
</dbReference>
<dbReference type="MIM" id="613130">
    <property type="type" value="gene"/>
</dbReference>
<dbReference type="neXtProt" id="NX_Q86WV5"/>
<dbReference type="OpenTargets" id="ENSG00000257949"/>
<dbReference type="PharmGKB" id="PA165431550"/>
<dbReference type="VEuPathDB" id="HostDB:ENSG00000257949"/>
<dbReference type="eggNOG" id="ENOG502S4ES">
    <property type="taxonomic scope" value="Eukaryota"/>
</dbReference>
<dbReference type="GeneTree" id="ENSGT00390000017589"/>
<dbReference type="HOGENOM" id="CLU_139244_0_0_1"/>
<dbReference type="InParanoid" id="Q86WV5"/>
<dbReference type="OMA" id="PWEVNSG"/>
<dbReference type="OrthoDB" id="342190at2759"/>
<dbReference type="PAN-GO" id="Q86WV5">
    <property type="GO annotations" value="4 GO annotations based on evolutionary models"/>
</dbReference>
<dbReference type="PhylomeDB" id="Q86WV5"/>
<dbReference type="TreeFam" id="TF333010"/>
<dbReference type="PathwayCommons" id="Q86WV5"/>
<dbReference type="Reactome" id="R-HSA-174411">
    <property type="pathway name" value="Polymerase switching on the C-strand of the telomere"/>
</dbReference>
<dbReference type="Reactome" id="R-HSA-174430">
    <property type="pathway name" value="Telomere C-strand synthesis initiation"/>
</dbReference>
<dbReference type="SignaLink" id="Q86WV5"/>
<dbReference type="BioGRID-ORCS" id="100134934">
    <property type="hits" value="382 hits in 1162 CRISPR screens"/>
</dbReference>
<dbReference type="ChiTaRS" id="TEN1">
    <property type="organism name" value="human"/>
</dbReference>
<dbReference type="EvolutionaryTrace" id="Q86WV5"/>
<dbReference type="GenomeRNAi" id="100134934"/>
<dbReference type="Pharos" id="Q86WV5">
    <property type="development level" value="Tbio"/>
</dbReference>
<dbReference type="PRO" id="PR:Q86WV5"/>
<dbReference type="Proteomes" id="UP000005640">
    <property type="component" value="Chromosome 17"/>
</dbReference>
<dbReference type="RNAct" id="Q86WV5">
    <property type="molecule type" value="protein"/>
</dbReference>
<dbReference type="Bgee" id="ENSG00000257949">
    <property type="expression patterns" value="Expressed in lower esophagus mucosa and 94 other cell types or tissues"/>
</dbReference>
<dbReference type="ExpressionAtlas" id="Q86WV5">
    <property type="expression patterns" value="baseline and differential"/>
</dbReference>
<dbReference type="GO" id="GO:0000781">
    <property type="term" value="C:chromosome, telomeric region"/>
    <property type="evidence" value="ECO:0000314"/>
    <property type="project" value="UniProtKB"/>
</dbReference>
<dbReference type="GO" id="GO:1990879">
    <property type="term" value="C:CST complex"/>
    <property type="evidence" value="ECO:0000314"/>
    <property type="project" value="BHF-UCL"/>
</dbReference>
<dbReference type="GO" id="GO:0005654">
    <property type="term" value="C:nucleoplasm"/>
    <property type="evidence" value="ECO:0000314"/>
    <property type="project" value="HPA"/>
</dbReference>
<dbReference type="GO" id="GO:0005634">
    <property type="term" value="C:nucleus"/>
    <property type="evidence" value="ECO:0000314"/>
    <property type="project" value="UniProtKB"/>
</dbReference>
<dbReference type="GO" id="GO:0003697">
    <property type="term" value="F:single-stranded DNA binding"/>
    <property type="evidence" value="ECO:0007669"/>
    <property type="project" value="InterPro"/>
</dbReference>
<dbReference type="GO" id="GO:0010521">
    <property type="term" value="F:telomerase inhibitor activity"/>
    <property type="evidence" value="ECO:0000318"/>
    <property type="project" value="GO_Central"/>
</dbReference>
<dbReference type="GO" id="GO:0042162">
    <property type="term" value="F:telomeric DNA binding"/>
    <property type="evidence" value="ECO:0000314"/>
    <property type="project" value="BHF-UCL"/>
</dbReference>
<dbReference type="GO" id="GO:0032211">
    <property type="term" value="P:negative regulation of telomere maintenance via telomerase"/>
    <property type="evidence" value="ECO:0000314"/>
    <property type="project" value="BHF-UCL"/>
</dbReference>
<dbReference type="GO" id="GO:0016233">
    <property type="term" value="P:telomere capping"/>
    <property type="evidence" value="ECO:0000304"/>
    <property type="project" value="BHF-UCL"/>
</dbReference>
<dbReference type="FunFam" id="2.40.50.140:FF:000203">
    <property type="entry name" value="TEN1 subunit of CST complex"/>
    <property type="match status" value="1"/>
</dbReference>
<dbReference type="Gene3D" id="2.40.50.140">
    <property type="entry name" value="Nucleic acid-binding proteins"/>
    <property type="match status" value="1"/>
</dbReference>
<dbReference type="InterPro" id="IPR012340">
    <property type="entry name" value="NA-bd_OB-fold"/>
</dbReference>
<dbReference type="InterPro" id="IPR029146">
    <property type="entry name" value="Ten1_animal_plant"/>
</dbReference>
<dbReference type="PANTHER" id="PTHR33905">
    <property type="entry name" value="CST COMPLEX SUBUNIT TEN1"/>
    <property type="match status" value="1"/>
</dbReference>
<dbReference type="PANTHER" id="PTHR33905:SF1">
    <property type="entry name" value="CST COMPLEX SUBUNIT TEN1"/>
    <property type="match status" value="1"/>
</dbReference>
<dbReference type="Pfam" id="PF15490">
    <property type="entry name" value="Ten1_2"/>
    <property type="match status" value="1"/>
</dbReference>
<name>TEN1L_HUMAN</name>
<protein>
    <recommendedName>
        <fullName>CST complex subunit TEN1</fullName>
    </recommendedName>
    <alternativeName>
        <fullName>Protein telomeric pathways with STN1 homolog</fullName>
    </alternativeName>
    <alternativeName>
        <fullName>Telomere length regulation protein TEN1 homolog</fullName>
    </alternativeName>
</protein>
<gene>
    <name type="primary">TEN1</name>
    <name type="synonym">C17orf106</name>
</gene>
<organism>
    <name type="scientific">Homo sapiens</name>
    <name type="common">Human</name>
    <dbReference type="NCBI Taxonomy" id="9606"/>
    <lineage>
        <taxon>Eukaryota</taxon>
        <taxon>Metazoa</taxon>
        <taxon>Chordata</taxon>
        <taxon>Craniata</taxon>
        <taxon>Vertebrata</taxon>
        <taxon>Euteleostomi</taxon>
        <taxon>Mammalia</taxon>
        <taxon>Eutheria</taxon>
        <taxon>Euarchontoglires</taxon>
        <taxon>Primates</taxon>
        <taxon>Haplorrhini</taxon>
        <taxon>Catarrhini</taxon>
        <taxon>Hominidae</taxon>
        <taxon>Homo</taxon>
    </lineage>
</organism>
<evidence type="ECO:0000269" key="1">
    <source>
    </source>
</evidence>
<evidence type="ECO:0000269" key="2">
    <source>
    </source>
</evidence>
<evidence type="ECO:0000269" key="3">
    <source>
    </source>
</evidence>
<evidence type="ECO:0000269" key="4">
    <source>
    </source>
</evidence>
<evidence type="ECO:0000305" key="5"/>
<evidence type="ECO:0007829" key="6">
    <source>
        <dbReference type="PDB" id="4JOI"/>
    </source>
</evidence>
<comment type="function">
    <text evidence="1 2 4">Component of the CST complex proposed to act as a specialized replication factor promoting DNA replication under conditions of replication stress or natural replication barriers such as the telomere duplex. The CST complex binds single-stranded DNA with high affinity in a sequence-independent manner, while isolated subunits bind DNA with low affinity by themselves. Initially the CST complex has been proposed to protect telomeres from DNA degradation (PubMed:19854130). However, the CST complex has been shown to be involved in several aspects of telomere replication. The CST complex inhibits telomerase and is involved in telomere length homeostasis; it is proposed to bind to newly telomerase-synthesized 3' overhangs and to terminate telomerase action implicating the association with the ACD:POT1 complex thus interfering with its telomerase stimulation activity. The CST complex is also proposed to be involved in fill-in synthesis of the telomeric C-strand probably implicating recruitment and activation of DNA polymerase alpha (PubMed:22763445). The CST complex facilitates recovery from many forms of exogenous DNA damage; seems to be involved in the re-initiation of DNA replication at repaired forks and/or dormant origins (PubMed:25483097).</text>
</comment>
<comment type="subunit">
    <text evidence="1 3">Component of the CST complex, composed of TEN1/C17orf106, CTC1/C17orf68 and STN1; in the complex interacts directly with STN1.</text>
</comment>
<comment type="interaction">
    <interactant intactId="EBI-2562799">
        <id>Q86WV5</id>
    </interactant>
    <interactant intactId="EBI-10988864">
        <id>P46379-2</id>
        <label>BAG6</label>
    </interactant>
    <organismsDiffer>false</organismsDiffer>
    <experiments>3</experiments>
</comment>
<comment type="interaction">
    <interactant intactId="EBI-2562799">
        <id>Q86WV5</id>
    </interactant>
    <interactant intactId="EBI-718729">
        <id>P55212</id>
        <label>CASP6</label>
    </interactant>
    <organismsDiffer>false</organismsDiffer>
    <experiments>3</experiments>
</comment>
<comment type="interaction">
    <interactant intactId="EBI-2562799">
        <id>Q86WV5</id>
    </interactant>
    <interactant intactId="EBI-2562802">
        <id>Q2NKJ3</id>
        <label>CTC1</label>
    </interactant>
    <organismsDiffer>false</organismsDiffer>
    <experiments>5</experiments>
</comment>
<comment type="interaction">
    <interactant intactId="EBI-2562799">
        <id>Q86WV5</id>
    </interactant>
    <interactant intactId="EBI-348399">
        <id>P22607</id>
        <label>FGFR3</label>
    </interactant>
    <organismsDiffer>false</organismsDiffer>
    <experiments>3</experiments>
</comment>
<comment type="interaction">
    <interactant intactId="EBI-2562799">
        <id>Q86WV5</id>
    </interactant>
    <interactant intactId="EBI-8285963">
        <id>Q14957</id>
        <label>GRIN2C</label>
    </interactant>
    <organismsDiffer>false</organismsDiffer>
    <experiments>3</experiments>
</comment>
<comment type="interaction">
    <interactant intactId="EBI-2562799">
        <id>Q86WV5</id>
    </interactant>
    <interactant intactId="EBI-352682">
        <id>P04792</id>
        <label>HSPB1</label>
    </interactant>
    <organismsDiffer>false</organismsDiffer>
    <experiments>3</experiments>
</comment>
<comment type="interaction">
    <interactant intactId="EBI-2562799">
        <id>Q86WV5</id>
    </interactant>
    <interactant intactId="EBI-517086">
        <id>O43464</id>
        <label>HTRA2</label>
    </interactant>
    <organismsDiffer>false</organismsDiffer>
    <experiments>3</experiments>
</comment>
<comment type="interaction">
    <interactant intactId="EBI-2562799">
        <id>Q86WV5</id>
    </interactant>
    <interactant intactId="EBI-466029">
        <id>P42858</id>
        <label>HTT</label>
    </interactant>
    <organismsDiffer>false</organismsDiffer>
    <experiments>9</experiments>
</comment>
<comment type="interaction">
    <interactant intactId="EBI-2562799">
        <id>Q86WV5</id>
    </interactant>
    <interactant intactId="EBI-10975473">
        <id>O60333-2</id>
        <label>KIF1B</label>
    </interactant>
    <organismsDiffer>false</organismsDiffer>
    <experiments>3</experiments>
</comment>
<comment type="interaction">
    <interactant intactId="EBI-2562799">
        <id>Q86WV5</id>
    </interactant>
    <interactant intactId="EBI-948266">
        <id>O14901</id>
        <label>KLF11</label>
    </interactant>
    <organismsDiffer>false</organismsDiffer>
    <experiments>3</experiments>
</comment>
<comment type="interaction">
    <interactant intactId="EBI-2562799">
        <id>Q86WV5</id>
    </interactant>
    <interactant intactId="EBI-21591415">
        <id>P13473-2</id>
        <label>LAMP2</label>
    </interactant>
    <organismsDiffer>false</organismsDiffer>
    <experiments>3</experiments>
</comment>
<comment type="interaction">
    <interactant intactId="EBI-2562799">
        <id>Q86WV5</id>
    </interactant>
    <interactant intactId="EBI-2811583">
        <id>Q9BVL2</id>
        <label>NUP58</label>
    </interactant>
    <organismsDiffer>false</organismsDiffer>
    <experiments>3</experiments>
</comment>
<comment type="interaction">
    <interactant intactId="EBI-2562799">
        <id>Q86WV5</id>
    </interactant>
    <interactant intactId="EBI-5280197">
        <id>O75400-2</id>
        <label>PRPF40A</label>
    </interactant>
    <organismsDiffer>false</organismsDiffer>
    <experiments>3</experiments>
</comment>
<comment type="interaction">
    <interactant intactId="EBI-2562799">
        <id>Q86WV5</id>
    </interactant>
    <interactant intactId="EBI-752074">
        <id>P41219</id>
        <label>PRPH</label>
    </interactant>
    <organismsDiffer>false</organismsDiffer>
    <experiments>3</experiments>
</comment>
<comment type="interaction">
    <interactant intactId="EBI-2562799">
        <id>Q86WV5</id>
    </interactant>
    <interactant intactId="EBI-749195">
        <id>P60891</id>
        <label>PRPS1</label>
    </interactant>
    <organismsDiffer>false</organismsDiffer>
    <experiments>3</experiments>
</comment>
<comment type="interaction">
    <interactant intactId="EBI-2562799">
        <id>Q86WV5</id>
    </interactant>
    <interactant intactId="EBI-286642">
        <id>P62826</id>
        <label>RAN</label>
    </interactant>
    <organismsDiffer>false</organismsDiffer>
    <experiments>3</experiments>
</comment>
<comment type="interaction">
    <interactant intactId="EBI-2562799">
        <id>Q86WV5</id>
    </interactant>
    <interactant intactId="EBI-746930">
        <id>Q9H668</id>
        <label>STN1</label>
    </interactant>
    <organismsDiffer>false</organismsDiffer>
    <experiments>13</experiments>
</comment>
<comment type="interaction">
    <interactant intactId="EBI-2562799">
        <id>Q86WV5</id>
    </interactant>
    <interactant intactId="EBI-741480">
        <id>Q9UMX0</id>
        <label>UBQLN1</label>
    </interactant>
    <organismsDiffer>false</organismsDiffer>
    <experiments>3</experiments>
</comment>
<comment type="interaction">
    <interactant intactId="EBI-2562799">
        <id>Q86WV5</id>
    </interactant>
    <interactant intactId="EBI-25900580">
        <id>Q9Y649</id>
    </interactant>
    <organismsDiffer>false</organismsDiffer>
    <experiments>3</experiments>
</comment>
<comment type="subcellular location">
    <subcellularLocation>
        <location evidence="1">Nucleus</location>
    </subcellularLocation>
    <subcellularLocation>
        <location evidence="1">Chromosome</location>
        <location evidence="1">Telomere</location>
    </subcellularLocation>
</comment>
<comment type="similarity">
    <text evidence="5">Belongs to the TEN1 family.</text>
</comment>
<comment type="caution">
    <text evidence="5">It is uncertain whether Met-1 or Met-2 is the initiator. Some orthologous sequences cannot be extended.</text>
</comment>
<comment type="sequence caution" evidence="5">
    <conflict type="erroneous initiation">
        <sequence resource="EMBL-CDS" id="AAH47782"/>
    </conflict>
    <text>Truncated N-terminus.</text>
</comment>